<name>MLTF_SALAR</name>
<dbReference type="EC" id="4.2.2.n1" evidence="1"/>
<dbReference type="EMBL" id="CP000880">
    <property type="protein sequence ID" value="ABX20248.1"/>
    <property type="molecule type" value="Genomic_DNA"/>
</dbReference>
<dbReference type="SMR" id="A9MGY7"/>
<dbReference type="STRING" id="41514.SARI_00308"/>
<dbReference type="CAZy" id="GH23">
    <property type="family name" value="Glycoside Hydrolase Family 23"/>
</dbReference>
<dbReference type="KEGG" id="ses:SARI_00308"/>
<dbReference type="HOGENOM" id="CLU_027494_0_1_6"/>
<dbReference type="Proteomes" id="UP000002084">
    <property type="component" value="Chromosome"/>
</dbReference>
<dbReference type="GO" id="GO:0009279">
    <property type="term" value="C:cell outer membrane"/>
    <property type="evidence" value="ECO:0007669"/>
    <property type="project" value="UniProtKB-SubCell"/>
</dbReference>
<dbReference type="GO" id="GO:0008933">
    <property type="term" value="F:peptidoglycan lytic transglycosylase activity"/>
    <property type="evidence" value="ECO:0007669"/>
    <property type="project" value="UniProtKB-UniRule"/>
</dbReference>
<dbReference type="GO" id="GO:0016998">
    <property type="term" value="P:cell wall macromolecule catabolic process"/>
    <property type="evidence" value="ECO:0007669"/>
    <property type="project" value="UniProtKB-UniRule"/>
</dbReference>
<dbReference type="GO" id="GO:0071555">
    <property type="term" value="P:cell wall organization"/>
    <property type="evidence" value="ECO:0007669"/>
    <property type="project" value="UniProtKB-KW"/>
</dbReference>
<dbReference type="GO" id="GO:0009253">
    <property type="term" value="P:peptidoglycan catabolic process"/>
    <property type="evidence" value="ECO:0007669"/>
    <property type="project" value="TreeGrafter"/>
</dbReference>
<dbReference type="CDD" id="cd13403">
    <property type="entry name" value="MLTF-like"/>
    <property type="match status" value="1"/>
</dbReference>
<dbReference type="CDD" id="cd01009">
    <property type="entry name" value="PBP2_YfhD_N"/>
    <property type="match status" value="1"/>
</dbReference>
<dbReference type="FunFam" id="1.10.530.10:FF:000003">
    <property type="entry name" value="Membrane-bound lytic murein transglycosylase F"/>
    <property type="match status" value="1"/>
</dbReference>
<dbReference type="FunFam" id="3.40.190.10:FF:000051">
    <property type="entry name" value="Membrane-bound lytic murein transglycosylase F"/>
    <property type="match status" value="1"/>
</dbReference>
<dbReference type="Gene3D" id="1.10.530.10">
    <property type="match status" value="1"/>
</dbReference>
<dbReference type="Gene3D" id="3.40.190.10">
    <property type="entry name" value="Periplasmic binding protein-like II"/>
    <property type="match status" value="2"/>
</dbReference>
<dbReference type="HAMAP" id="MF_02016">
    <property type="entry name" value="MltF"/>
    <property type="match status" value="1"/>
</dbReference>
<dbReference type="InterPro" id="IPR023346">
    <property type="entry name" value="Lysozyme-like_dom_sf"/>
</dbReference>
<dbReference type="InterPro" id="IPR023703">
    <property type="entry name" value="MltF"/>
</dbReference>
<dbReference type="InterPro" id="IPR001638">
    <property type="entry name" value="Solute-binding_3/MltF_N"/>
</dbReference>
<dbReference type="InterPro" id="IPR000189">
    <property type="entry name" value="Transglyc_AS"/>
</dbReference>
<dbReference type="InterPro" id="IPR008258">
    <property type="entry name" value="Transglycosylase_SLT_dom_1"/>
</dbReference>
<dbReference type="NCBIfam" id="NF008112">
    <property type="entry name" value="PRK10859.1"/>
    <property type="match status" value="1"/>
</dbReference>
<dbReference type="PANTHER" id="PTHR35936">
    <property type="entry name" value="MEMBRANE-BOUND LYTIC MUREIN TRANSGLYCOSYLASE F"/>
    <property type="match status" value="1"/>
</dbReference>
<dbReference type="PANTHER" id="PTHR35936:SF32">
    <property type="entry name" value="MEMBRANE-BOUND LYTIC MUREIN TRANSGLYCOSYLASE F"/>
    <property type="match status" value="1"/>
</dbReference>
<dbReference type="Pfam" id="PF00497">
    <property type="entry name" value="SBP_bac_3"/>
    <property type="match status" value="1"/>
</dbReference>
<dbReference type="Pfam" id="PF01464">
    <property type="entry name" value="SLT"/>
    <property type="match status" value="1"/>
</dbReference>
<dbReference type="SMART" id="SM00062">
    <property type="entry name" value="PBPb"/>
    <property type="match status" value="1"/>
</dbReference>
<dbReference type="SUPFAM" id="SSF53955">
    <property type="entry name" value="Lysozyme-like"/>
    <property type="match status" value="1"/>
</dbReference>
<dbReference type="SUPFAM" id="SSF53850">
    <property type="entry name" value="Periplasmic binding protein-like II"/>
    <property type="match status" value="1"/>
</dbReference>
<dbReference type="PROSITE" id="PS00922">
    <property type="entry name" value="TRANSGLYCOSYLASE"/>
    <property type="match status" value="1"/>
</dbReference>
<organism>
    <name type="scientific">Salmonella arizonae (strain ATCC BAA-731 / CDC346-86 / RSK2980)</name>
    <dbReference type="NCBI Taxonomy" id="41514"/>
    <lineage>
        <taxon>Bacteria</taxon>
        <taxon>Pseudomonadati</taxon>
        <taxon>Pseudomonadota</taxon>
        <taxon>Gammaproteobacteria</taxon>
        <taxon>Enterobacterales</taxon>
        <taxon>Enterobacteriaceae</taxon>
        <taxon>Salmonella</taxon>
    </lineage>
</organism>
<gene>
    <name evidence="1" type="primary">mltF</name>
    <name type="ordered locus">SARI_00308</name>
</gene>
<reference key="1">
    <citation type="submission" date="2007-11" db="EMBL/GenBank/DDBJ databases">
        <authorList>
            <consortium name="The Salmonella enterica serovar Arizonae Genome Sequencing Project"/>
            <person name="McClelland M."/>
            <person name="Sanderson E.K."/>
            <person name="Porwollik S."/>
            <person name="Spieth J."/>
            <person name="Clifton W.S."/>
            <person name="Fulton R."/>
            <person name="Chunyan W."/>
            <person name="Wollam A."/>
            <person name="Shah N."/>
            <person name="Pepin K."/>
            <person name="Bhonagiri V."/>
            <person name="Nash W."/>
            <person name="Johnson M."/>
            <person name="Thiruvilangam P."/>
            <person name="Wilson R."/>
        </authorList>
    </citation>
    <scope>NUCLEOTIDE SEQUENCE [LARGE SCALE GENOMIC DNA]</scope>
    <source>
        <strain>ATCC BAA-731 / CDC346-86 / RSK2980</strain>
    </source>
</reference>
<keyword id="KW-0998">Cell outer membrane</keyword>
<keyword id="KW-0961">Cell wall biogenesis/degradation</keyword>
<keyword id="KW-0456">Lyase</keyword>
<keyword id="KW-0472">Membrane</keyword>
<keyword id="KW-1185">Reference proteome</keyword>
<keyword id="KW-0732">Signal</keyword>
<proteinExistence type="inferred from homology"/>
<feature type="signal peptide" evidence="1">
    <location>
        <begin position="1"/>
        <end position="30"/>
    </location>
</feature>
<feature type="chain" id="PRO_0000353970" description="Membrane-bound lytic murein transglycosylase F">
    <location>
        <begin position="31"/>
        <end position="514"/>
    </location>
</feature>
<feature type="region of interest" description="Non-LT domain" evidence="1">
    <location>
        <begin position="31"/>
        <end position="269"/>
    </location>
</feature>
<feature type="region of interest" description="LT domain" evidence="1">
    <location>
        <begin position="270"/>
        <end position="514"/>
    </location>
</feature>
<feature type="active site" evidence="1">
    <location>
        <position position="314"/>
    </location>
</feature>
<protein>
    <recommendedName>
        <fullName evidence="1">Membrane-bound lytic murein transglycosylase F</fullName>
        <ecNumber evidence="1">4.2.2.n1</ecNumber>
    </recommendedName>
    <alternativeName>
        <fullName evidence="1">Murein lyase F</fullName>
    </alternativeName>
</protein>
<sequence length="514" mass="57969">MKKLKINYLFIGILTLLLAAALWPSIPWFGKTENHVAAIQARGVLRVSTIDSPLTYAVVNGKKYGLDYELAQQFANYLGVKLKITVRQNISQLFDDLDNGNADLLAAGLVYDSARVKKYQPGPMYYSVSQQLVYRVGQYRPRSLATVTENQLTIAPGHVVVNDLQRLKETKFPDLSWKVDDKKGSTTLLEDVINGKLDYTIADSVAISLFQRVHPELAVALDVTDEQPVTWFSRLDDDNTLSAALLDFFNSINEDGSLARIEEKYLGHGDDFDYVDTRSFLRAVDNVLPELEALFKKYAKEIDWRLLAAISYQESHWDPQATSPTGVRGLMMLTKNTAQSLGLTDRTDAEQSISGGARYLEDMMAKVPETVPEDERIWFALAAYNMGYAHMLDARALTVKTKGNPDSWTDVKQRLPLLSQKPYYSKLTYGYARGHEAYAYVENIRKYQISLVGYLQEKEKQEAEAMKLAQDYPAASPEELNKAPFPFISFLSQSSGYLTHSPSLLFTPQKKEEK</sequence>
<accession>A9MGY7</accession>
<comment type="function">
    <text evidence="1">Murein-degrading enzyme that degrades murein glycan strands and insoluble, high-molecular weight murein sacculi, with the concomitant formation of a 1,6-anhydromuramoyl product. Lytic transglycosylases (LTs) play an integral role in the metabolism of the peptidoglycan (PG) sacculus. Their lytic action creates space within the PG sacculus to allow for its expansion as well as for the insertion of various structures such as secretion systems and flagella.</text>
</comment>
<comment type="catalytic activity">
    <reaction evidence="1">
        <text>Exolytic cleavage of the (1-&gt;4)-beta-glycosidic linkage between N-acetylmuramic acid (MurNAc) and N-acetylglucosamine (GlcNAc) residues in peptidoglycan, from either the reducing or the non-reducing ends of the peptidoglycan chains, with concomitant formation of a 1,6-anhydrobond in the MurNAc residue.</text>
        <dbReference type="EC" id="4.2.2.n1"/>
    </reaction>
</comment>
<comment type="subcellular location">
    <subcellularLocation>
        <location>Cell outer membrane</location>
        <topology>Peripheral membrane protein</topology>
    </subcellularLocation>
    <text evidence="1">Attached to the inner leaflet of the outer membrane.</text>
</comment>
<comment type="domain">
    <text evidence="1">The N-terminal domain does not have lytic activity and probably modulates enzymatic activity. The C-terminal domain is the catalytic active domain.</text>
</comment>
<comment type="similarity">
    <text evidence="1">In the N-terminal section; belongs to the bacterial solute-binding protein 3 family.</text>
</comment>
<comment type="similarity">
    <text evidence="1">In the C-terminal section; belongs to the transglycosylase Slt family.</text>
</comment>
<evidence type="ECO:0000255" key="1">
    <source>
        <dbReference type="HAMAP-Rule" id="MF_02016"/>
    </source>
</evidence>